<sequence length="198" mass="21716">MQLSNFLSIWALVAMGATAAPMPSGSAPGNPFADGEAYGARPSQGLTPVPKVHDGSYHSCETCAAPFRTEERLAAHRQADHGNQGAAARGSGRHTSKNRGSSKTSERERLDRLASRVGEDYVEKRSQEATEEQEQGHVKPGRSKKEIAQRIRNLPVTPWNQYGAAVKLDKPTRKEQYRQLPGNDRLTPFEEQGDPVQL</sequence>
<comment type="function">
    <text evidence="4">Secreted effector that translocates into the nuclei of host cells to reprogram the expression of immunity-associated genes by binding to effector binding elements (EBEs) in rice (PubMed:33203871). Binds the 5'-CAATCTTC-3' EBE of promoters from targeted rice genes and probably recruits a yet to be determined host repressor (PubMed:33203871). Causes ambivalent immunity with increased susceptibility to the hemibiotrophic pathogens Magnaporthe oryzae and Xanthomonas oryzae pv. oryzae, but enhances resistance to Cochliobolus miyabeanus, a necrotrophic pathogen (PubMed:33203871).</text>
</comment>
<comment type="subcellular location">
    <subcellularLocation>
        <location evidence="4">Secreted</location>
    </subcellularLocation>
    <subcellularLocation>
        <location evidence="4">Host nucleus</location>
    </subcellularLocation>
    <text evidence="4">Secreted via the biotrophic interfacial complex (BIC) and translocated into the nuclei of initially penetrated and surrounding cells.</text>
</comment>
<comment type="induction">
    <text evidence="4">Expressed during multiple stages of host plant infection, including prepenetration, early biotrophy, late biotrophy, transition and necrotrophy.</text>
</comment>
<comment type="disruption phenotype">
    <text evidence="4">Does not affect vegetative growth, conidiation, conidial germination, nor appressorium formation, but leads to significantly reduced virulence to rice.</text>
</comment>
<comment type="online information" name="Protein Spotlight">
    <link uri="https://www.proteinspotlight.org/back_issues/247/"/>
    <text>Sapped - Issue 247 of May 2022</text>
</comment>
<protein>
    <recommendedName>
        <fullName evidence="5">Host transcription reprogramming factor 1</fullName>
    </recommendedName>
    <alternativeName>
        <fullName evidence="5">Secreted nuclear effector HTR1</fullName>
    </alternativeName>
</protein>
<name>HTR1_PYRO7</name>
<gene>
    <name evidence="5" type="primary">HTR1</name>
    <name type="ORF">MGCH7_ch7g1044</name>
    <name type="ORF">MGG_10276</name>
</gene>
<dbReference type="EMBL" id="CM000230">
    <property type="protein sequence ID" value="EAQ71637.1"/>
    <property type="molecule type" value="Genomic_DNA"/>
</dbReference>
<dbReference type="EMBL" id="JH165178">
    <property type="protein sequence ID" value="KYQ30505.1"/>
    <property type="molecule type" value="Genomic_DNA"/>
</dbReference>
<dbReference type="RefSeq" id="XP_016846009.1">
    <property type="nucleotide sequence ID" value="XM_016990522.1"/>
</dbReference>
<dbReference type="EnsemblFungi" id="MGG_10276T0">
    <property type="protein sequence ID" value="MGG_10276T0"/>
    <property type="gene ID" value="MGG_10276"/>
</dbReference>
<dbReference type="GeneID" id="2681827"/>
<dbReference type="KEGG" id="mgr:MGG_10276"/>
<dbReference type="VEuPathDB" id="FungiDB:MGG_10276"/>
<dbReference type="HOGENOM" id="CLU_1378381_0_0_1"/>
<dbReference type="InParanoid" id="Q2KEJ2"/>
<dbReference type="OrthoDB" id="10635345at2759"/>
<dbReference type="Proteomes" id="UP000009058">
    <property type="component" value="Unassembled WGS sequence"/>
</dbReference>
<dbReference type="GO" id="GO:0005737">
    <property type="term" value="C:cytoplasm"/>
    <property type="evidence" value="ECO:0000269"/>
    <property type="project" value="PHI-base"/>
</dbReference>
<dbReference type="GO" id="GO:0005576">
    <property type="term" value="C:extracellular region"/>
    <property type="evidence" value="ECO:0007669"/>
    <property type="project" value="UniProtKB-SubCell"/>
</dbReference>
<dbReference type="GO" id="GO:0042025">
    <property type="term" value="C:host cell nucleus"/>
    <property type="evidence" value="ECO:0000269"/>
    <property type="project" value="PHI-base"/>
</dbReference>
<dbReference type="GO" id="GO:0085039">
    <property type="term" value="C:hyphal membrane"/>
    <property type="evidence" value="ECO:0000269"/>
    <property type="project" value="PHI-base"/>
</dbReference>
<dbReference type="GO" id="GO:0001227">
    <property type="term" value="F:DNA-binding transcription repressor activity, RNA polymerase II-specific"/>
    <property type="evidence" value="ECO:0000269"/>
    <property type="project" value="PHI-base"/>
</dbReference>
<dbReference type="GO" id="GO:0000979">
    <property type="term" value="F:RNA polymerase II core promoter sequence-specific DNA binding"/>
    <property type="evidence" value="ECO:0000314"/>
    <property type="project" value="PHI-base"/>
</dbReference>
<dbReference type="GO" id="GO:0008270">
    <property type="term" value="F:zinc ion binding"/>
    <property type="evidence" value="ECO:0007669"/>
    <property type="project" value="UniProtKB-KW"/>
</dbReference>
<dbReference type="GO" id="GO:0140403">
    <property type="term" value="P:effector-mediated suppression of host innate immune response"/>
    <property type="evidence" value="ECO:0000314"/>
    <property type="project" value="PHI-base"/>
</dbReference>
<dbReference type="InterPro" id="IPR013087">
    <property type="entry name" value="Znf_C2H2_type"/>
</dbReference>
<dbReference type="PROSITE" id="PS00028">
    <property type="entry name" value="ZINC_FINGER_C2H2_1"/>
    <property type="match status" value="1"/>
</dbReference>
<dbReference type="PROSITE" id="PS50157">
    <property type="entry name" value="ZINC_FINGER_C2H2_2"/>
    <property type="match status" value="1"/>
</dbReference>
<reference key="1">
    <citation type="journal article" date="2005" name="Nature">
        <title>The genome sequence of the rice blast fungus Magnaporthe grisea.</title>
        <authorList>
            <person name="Dean R.A."/>
            <person name="Talbot N.J."/>
            <person name="Ebbole D.J."/>
            <person name="Farman M.L."/>
            <person name="Mitchell T.K."/>
            <person name="Orbach M.J."/>
            <person name="Thon M.R."/>
            <person name="Kulkarni R."/>
            <person name="Xu J.-R."/>
            <person name="Pan H."/>
            <person name="Read N.D."/>
            <person name="Lee Y.-H."/>
            <person name="Carbone I."/>
            <person name="Brown D."/>
            <person name="Oh Y.Y."/>
            <person name="Donofrio N."/>
            <person name="Jeong J.S."/>
            <person name="Soanes D.M."/>
            <person name="Djonovic S."/>
            <person name="Kolomiets E."/>
            <person name="Rehmeyer C."/>
            <person name="Li W."/>
            <person name="Harding M."/>
            <person name="Kim S."/>
            <person name="Lebrun M.-H."/>
            <person name="Bohnert H."/>
            <person name="Coughlan S."/>
            <person name="Butler J."/>
            <person name="Calvo S.E."/>
            <person name="Ma L.-J."/>
            <person name="Nicol R."/>
            <person name="Purcell S."/>
            <person name="Nusbaum C."/>
            <person name="Galagan J.E."/>
            <person name="Birren B.W."/>
        </authorList>
    </citation>
    <scope>NUCLEOTIDE SEQUENCE [LARGE SCALE GENOMIC DNA]</scope>
    <source>
        <strain>70-15 / ATCC MYA-4617 / FGSC 8958</strain>
    </source>
</reference>
<reference key="2">
    <citation type="journal article" date="2020" name="Nat. Commun.">
        <title>Two nuclear effectors of the rice blast fungus modulate host immunity via transcriptional reprogramming.</title>
        <authorList>
            <person name="Kim S."/>
            <person name="Kim C.Y."/>
            <person name="Park S.Y."/>
            <person name="Kim K.T."/>
            <person name="Jeon J."/>
            <person name="Chung H."/>
            <person name="Choi G."/>
            <person name="Kwon S."/>
            <person name="Choi J."/>
            <person name="Jeon J."/>
            <person name="Jeon J.S."/>
            <person name="Khang C.H."/>
            <person name="Kang S."/>
            <person name="Lee Y.H."/>
        </authorList>
    </citation>
    <scope>FUNCTION</scope>
    <scope>INDUCTION</scope>
    <scope>SUBCELLULAR LOCATION</scope>
    <scope>DISRUPTION PHENOTYPE</scope>
</reference>
<accession>Q2KEJ2</accession>
<accession>A4QX86</accession>
<feature type="signal peptide" evidence="1">
    <location>
        <begin position="1"/>
        <end position="19"/>
    </location>
</feature>
<feature type="chain" id="PRO_5011098161" description="Host transcription reprogramming factor 1">
    <location>
        <begin position="20"/>
        <end position="198"/>
    </location>
</feature>
<feature type="zinc finger region" description="C2H2-type" evidence="2">
    <location>
        <begin position="58"/>
        <end position="81"/>
    </location>
</feature>
<feature type="region of interest" description="Disordered" evidence="3">
    <location>
        <begin position="21"/>
        <end position="59"/>
    </location>
</feature>
<feature type="region of interest" description="Disordered" evidence="3">
    <location>
        <begin position="71"/>
        <end position="198"/>
    </location>
</feature>
<feature type="compositionally biased region" description="Basic and acidic residues" evidence="3">
    <location>
        <begin position="71"/>
        <end position="80"/>
    </location>
</feature>
<feature type="compositionally biased region" description="Basic and acidic residues" evidence="3">
    <location>
        <begin position="104"/>
        <end position="128"/>
    </location>
</feature>
<feature type="compositionally biased region" description="Basic and acidic residues" evidence="3">
    <location>
        <begin position="167"/>
        <end position="177"/>
    </location>
</feature>
<keyword id="KW-1048">Host nucleus</keyword>
<keyword id="KW-0479">Metal-binding</keyword>
<keyword id="KW-1185">Reference proteome</keyword>
<keyword id="KW-0678">Repressor</keyword>
<keyword id="KW-0964">Secreted</keyword>
<keyword id="KW-0732">Signal</keyword>
<keyword id="KW-0804">Transcription</keyword>
<keyword id="KW-0805">Transcription regulation</keyword>
<keyword id="KW-0843">Virulence</keyword>
<keyword id="KW-0862">Zinc</keyword>
<keyword id="KW-0863">Zinc-finger</keyword>
<organism>
    <name type="scientific">Pyricularia oryzae (strain 70-15 / ATCC MYA-4617 / FGSC 8958)</name>
    <name type="common">Rice blast fungus</name>
    <name type="synonym">Magnaporthe oryzae</name>
    <dbReference type="NCBI Taxonomy" id="242507"/>
    <lineage>
        <taxon>Eukaryota</taxon>
        <taxon>Fungi</taxon>
        <taxon>Dikarya</taxon>
        <taxon>Ascomycota</taxon>
        <taxon>Pezizomycotina</taxon>
        <taxon>Sordariomycetes</taxon>
        <taxon>Sordariomycetidae</taxon>
        <taxon>Magnaporthales</taxon>
        <taxon>Pyriculariaceae</taxon>
        <taxon>Pyricularia</taxon>
    </lineage>
</organism>
<proteinExistence type="evidence at transcript level"/>
<evidence type="ECO:0000255" key="1"/>
<evidence type="ECO:0000255" key="2">
    <source>
        <dbReference type="PROSITE-ProRule" id="PRU00042"/>
    </source>
</evidence>
<evidence type="ECO:0000256" key="3">
    <source>
        <dbReference type="SAM" id="MobiDB-lite"/>
    </source>
</evidence>
<evidence type="ECO:0000269" key="4">
    <source>
    </source>
</evidence>
<evidence type="ECO:0000303" key="5">
    <source>
    </source>
</evidence>